<gene>
    <name type="primary">yciZ</name>
    <name type="ordered locus">SF1289</name>
    <name type="ordered locus">S1371.1</name>
</gene>
<comment type="similarity">
    <text evidence="1">Belongs to the UPF0509 family.</text>
</comment>
<comment type="sequence caution" evidence="1">
    <conflict type="erroneous initiation">
        <sequence resource="EMBL-CDS" id="AAN42901"/>
    </conflict>
</comment>
<reference key="1">
    <citation type="journal article" date="2002" name="Nucleic Acids Res.">
        <title>Genome sequence of Shigella flexneri 2a: insights into pathogenicity through comparison with genomes of Escherichia coli K12 and O157.</title>
        <authorList>
            <person name="Jin Q."/>
            <person name="Yuan Z."/>
            <person name="Xu J."/>
            <person name="Wang Y."/>
            <person name="Shen Y."/>
            <person name="Lu W."/>
            <person name="Wang J."/>
            <person name="Liu H."/>
            <person name="Yang J."/>
            <person name="Yang F."/>
            <person name="Zhang X."/>
            <person name="Zhang J."/>
            <person name="Yang G."/>
            <person name="Wu H."/>
            <person name="Qu D."/>
            <person name="Dong J."/>
            <person name="Sun L."/>
            <person name="Xue Y."/>
            <person name="Zhao A."/>
            <person name="Gao Y."/>
            <person name="Zhu J."/>
            <person name="Kan B."/>
            <person name="Ding K."/>
            <person name="Chen S."/>
            <person name="Cheng H."/>
            <person name="Yao Z."/>
            <person name="He B."/>
            <person name="Chen R."/>
            <person name="Ma D."/>
            <person name="Qiang B."/>
            <person name="Wen Y."/>
            <person name="Hou Y."/>
            <person name="Yu J."/>
        </authorList>
    </citation>
    <scope>NUCLEOTIDE SEQUENCE [LARGE SCALE GENOMIC DNA]</scope>
    <source>
        <strain>301 / Serotype 2a</strain>
    </source>
</reference>
<reference key="2">
    <citation type="journal article" date="2003" name="Infect. Immun.">
        <title>Complete genome sequence and comparative genomics of Shigella flexneri serotype 2a strain 2457T.</title>
        <authorList>
            <person name="Wei J."/>
            <person name="Goldberg M.B."/>
            <person name="Burland V."/>
            <person name="Venkatesan M.M."/>
            <person name="Deng W."/>
            <person name="Fournier G."/>
            <person name="Mayhew G.F."/>
            <person name="Plunkett G. III"/>
            <person name="Rose D.J."/>
            <person name="Darling A."/>
            <person name="Mau B."/>
            <person name="Perna N.T."/>
            <person name="Payne S.M."/>
            <person name="Runyen-Janecky L.J."/>
            <person name="Zhou S."/>
            <person name="Schwartz D.C."/>
            <person name="Blattner F.R."/>
        </authorList>
    </citation>
    <scope>NUCLEOTIDE SEQUENCE [LARGE SCALE GENOMIC DNA]</scope>
    <source>
        <strain>ATCC 700930 / 2457T / Serotype 2a</strain>
    </source>
</reference>
<dbReference type="EMBL" id="AE005674">
    <property type="protein sequence ID" value="AAN42901.1"/>
    <property type="status" value="ALT_INIT"/>
    <property type="molecule type" value="Genomic_DNA"/>
</dbReference>
<dbReference type="EMBL" id="AE014073">
    <property type="status" value="NOT_ANNOTATED_CDS"/>
    <property type="molecule type" value="Genomic_DNA"/>
</dbReference>
<dbReference type="RefSeq" id="NP_707194.1">
    <property type="nucleotide sequence ID" value="NC_004337.2"/>
</dbReference>
<dbReference type="RefSeq" id="WP_001288369.1">
    <property type="nucleotide sequence ID" value="NZ_WPGW01000009.1"/>
</dbReference>
<dbReference type="PaxDb" id="198214-SF1289"/>
<dbReference type="GeneID" id="1024207"/>
<dbReference type="KEGG" id="sfl:SF1289"/>
<dbReference type="PATRIC" id="fig|198214.7.peg.1511"/>
<dbReference type="HOGENOM" id="CLU_180697_1_0_6"/>
<dbReference type="Proteomes" id="UP000001006">
    <property type="component" value="Chromosome"/>
</dbReference>
<dbReference type="Proteomes" id="UP000002673">
    <property type="component" value="Chromosome"/>
</dbReference>
<dbReference type="HAMAP" id="MF_01641">
    <property type="entry name" value="UPF0509"/>
    <property type="match status" value="1"/>
</dbReference>
<dbReference type="InterPro" id="IPR020887">
    <property type="entry name" value="UPF0509"/>
</dbReference>
<dbReference type="NCBIfam" id="NF010179">
    <property type="entry name" value="PRK13658.1"/>
    <property type="match status" value="1"/>
</dbReference>
<dbReference type="Pfam" id="PF23675">
    <property type="entry name" value="YciZ"/>
    <property type="match status" value="1"/>
</dbReference>
<proteinExistence type="inferred from homology"/>
<protein>
    <recommendedName>
        <fullName>UPF0509 protein YciZ</fullName>
    </recommendedName>
</protein>
<name>YCIZ_SHIFL</name>
<accession>Q83LB9</accession>
<evidence type="ECO:0000305" key="1"/>
<feature type="chain" id="PRO_0000312014" description="UPF0509 protein YciZ">
    <location>
        <begin position="1"/>
        <end position="57"/>
    </location>
</feature>
<sequence>MSEFDAQRVAERIDIVLDILVAGDYHSAIHNLEILKAELLRQVAESTPDIPKTPWEI</sequence>
<organism>
    <name type="scientific">Shigella flexneri</name>
    <dbReference type="NCBI Taxonomy" id="623"/>
    <lineage>
        <taxon>Bacteria</taxon>
        <taxon>Pseudomonadati</taxon>
        <taxon>Pseudomonadota</taxon>
        <taxon>Gammaproteobacteria</taxon>
        <taxon>Enterobacterales</taxon>
        <taxon>Enterobacteriaceae</taxon>
        <taxon>Shigella</taxon>
    </lineage>
</organism>
<keyword id="KW-1185">Reference proteome</keyword>